<dbReference type="EC" id="5.4.2.11" evidence="1"/>
<dbReference type="EMBL" id="CP000103">
    <property type="protein sequence ID" value="ABB74424.1"/>
    <property type="molecule type" value="Genomic_DNA"/>
</dbReference>
<dbReference type="RefSeq" id="WP_011380465.1">
    <property type="nucleotide sequence ID" value="NC_007614.1"/>
</dbReference>
<dbReference type="SMR" id="Q2Y9Z7"/>
<dbReference type="STRING" id="323848.Nmul_A1121"/>
<dbReference type="KEGG" id="nmu:Nmul_A1121"/>
<dbReference type="eggNOG" id="COG0588">
    <property type="taxonomic scope" value="Bacteria"/>
</dbReference>
<dbReference type="HOGENOM" id="CLU_033323_1_1_4"/>
<dbReference type="OrthoDB" id="9781415at2"/>
<dbReference type="UniPathway" id="UPA00109">
    <property type="reaction ID" value="UER00186"/>
</dbReference>
<dbReference type="Proteomes" id="UP000002718">
    <property type="component" value="Chromosome"/>
</dbReference>
<dbReference type="GO" id="GO:0004619">
    <property type="term" value="F:phosphoglycerate mutase activity"/>
    <property type="evidence" value="ECO:0007669"/>
    <property type="project" value="UniProtKB-EC"/>
</dbReference>
<dbReference type="GO" id="GO:0006094">
    <property type="term" value="P:gluconeogenesis"/>
    <property type="evidence" value="ECO:0007669"/>
    <property type="project" value="UniProtKB-UniRule"/>
</dbReference>
<dbReference type="GO" id="GO:0006096">
    <property type="term" value="P:glycolytic process"/>
    <property type="evidence" value="ECO:0007669"/>
    <property type="project" value="UniProtKB-UniRule"/>
</dbReference>
<dbReference type="CDD" id="cd07067">
    <property type="entry name" value="HP_PGM_like"/>
    <property type="match status" value="1"/>
</dbReference>
<dbReference type="FunFam" id="3.40.50.1240:FF:000003">
    <property type="entry name" value="2,3-bisphosphoglycerate-dependent phosphoglycerate mutase"/>
    <property type="match status" value="1"/>
</dbReference>
<dbReference type="Gene3D" id="3.40.50.1240">
    <property type="entry name" value="Phosphoglycerate mutase-like"/>
    <property type="match status" value="1"/>
</dbReference>
<dbReference type="HAMAP" id="MF_01039">
    <property type="entry name" value="PGAM_GpmA"/>
    <property type="match status" value="1"/>
</dbReference>
<dbReference type="InterPro" id="IPR013078">
    <property type="entry name" value="His_Pase_superF_clade-1"/>
</dbReference>
<dbReference type="InterPro" id="IPR029033">
    <property type="entry name" value="His_PPase_superfam"/>
</dbReference>
<dbReference type="InterPro" id="IPR001345">
    <property type="entry name" value="PG/BPGM_mutase_AS"/>
</dbReference>
<dbReference type="InterPro" id="IPR005952">
    <property type="entry name" value="Phosphogly_mut1"/>
</dbReference>
<dbReference type="NCBIfam" id="TIGR01258">
    <property type="entry name" value="pgm_1"/>
    <property type="match status" value="1"/>
</dbReference>
<dbReference type="NCBIfam" id="NF010713">
    <property type="entry name" value="PRK14115.1"/>
    <property type="match status" value="1"/>
</dbReference>
<dbReference type="PANTHER" id="PTHR11931">
    <property type="entry name" value="PHOSPHOGLYCERATE MUTASE"/>
    <property type="match status" value="1"/>
</dbReference>
<dbReference type="Pfam" id="PF00300">
    <property type="entry name" value="His_Phos_1"/>
    <property type="match status" value="1"/>
</dbReference>
<dbReference type="PIRSF" id="PIRSF000709">
    <property type="entry name" value="6PFK_2-Ptase"/>
    <property type="match status" value="1"/>
</dbReference>
<dbReference type="SMART" id="SM00855">
    <property type="entry name" value="PGAM"/>
    <property type="match status" value="1"/>
</dbReference>
<dbReference type="SUPFAM" id="SSF53254">
    <property type="entry name" value="Phosphoglycerate mutase-like"/>
    <property type="match status" value="1"/>
</dbReference>
<dbReference type="PROSITE" id="PS00175">
    <property type="entry name" value="PG_MUTASE"/>
    <property type="match status" value="1"/>
</dbReference>
<protein>
    <recommendedName>
        <fullName evidence="1">2,3-bisphosphoglycerate-dependent phosphoglycerate mutase 2</fullName>
        <shortName evidence="1">BPG-dependent PGAM 2</shortName>
        <shortName evidence="1">PGAM 2</shortName>
        <shortName evidence="1">Phosphoglyceromutase 2</shortName>
        <shortName evidence="1">dPGM 2</shortName>
        <ecNumber evidence="1">5.4.2.11</ecNumber>
    </recommendedName>
</protein>
<evidence type="ECO:0000255" key="1">
    <source>
        <dbReference type="HAMAP-Rule" id="MF_01039"/>
    </source>
</evidence>
<name>GPMA2_NITMU</name>
<proteinExistence type="inferred from homology"/>
<comment type="function">
    <text evidence="1">Catalyzes the interconversion of 2-phosphoglycerate and 3-phosphoglycerate.</text>
</comment>
<comment type="catalytic activity">
    <reaction evidence="1">
        <text>(2R)-2-phosphoglycerate = (2R)-3-phosphoglycerate</text>
        <dbReference type="Rhea" id="RHEA:15901"/>
        <dbReference type="ChEBI" id="CHEBI:58272"/>
        <dbReference type="ChEBI" id="CHEBI:58289"/>
        <dbReference type="EC" id="5.4.2.11"/>
    </reaction>
</comment>
<comment type="pathway">
    <text evidence="1">Carbohydrate degradation; glycolysis; pyruvate from D-glyceraldehyde 3-phosphate: step 3/5.</text>
</comment>
<comment type="subunit">
    <text evidence="1">Homodimer.</text>
</comment>
<comment type="similarity">
    <text evidence="1">Belongs to the phosphoglycerate mutase family. BPG-dependent PGAM subfamily.</text>
</comment>
<keyword id="KW-0312">Gluconeogenesis</keyword>
<keyword id="KW-0324">Glycolysis</keyword>
<keyword id="KW-0413">Isomerase</keyword>
<keyword id="KW-1185">Reference proteome</keyword>
<feature type="chain" id="PRO_0000229132" description="2,3-bisphosphoglycerate-dependent phosphoglycerate mutase 2">
    <location>
        <begin position="1"/>
        <end position="251"/>
    </location>
</feature>
<feature type="active site" description="Tele-phosphohistidine intermediate" evidence="1">
    <location>
        <position position="9"/>
    </location>
</feature>
<feature type="active site" description="Proton donor/acceptor" evidence="1">
    <location>
        <position position="87"/>
    </location>
</feature>
<feature type="binding site" evidence="1">
    <location>
        <begin position="8"/>
        <end position="15"/>
    </location>
    <ligand>
        <name>substrate</name>
    </ligand>
</feature>
<feature type="binding site" evidence="1">
    <location>
        <begin position="21"/>
        <end position="22"/>
    </location>
    <ligand>
        <name>substrate</name>
    </ligand>
</feature>
<feature type="binding site" evidence="1">
    <location>
        <position position="60"/>
    </location>
    <ligand>
        <name>substrate</name>
    </ligand>
</feature>
<feature type="binding site" evidence="1">
    <location>
        <begin position="87"/>
        <end position="90"/>
    </location>
    <ligand>
        <name>substrate</name>
    </ligand>
</feature>
<feature type="binding site" evidence="1">
    <location>
        <position position="98"/>
    </location>
    <ligand>
        <name>substrate</name>
    </ligand>
</feature>
<feature type="binding site" evidence="1">
    <location>
        <begin position="114"/>
        <end position="115"/>
    </location>
    <ligand>
        <name>substrate</name>
    </ligand>
</feature>
<feature type="binding site" evidence="1">
    <location>
        <begin position="183"/>
        <end position="184"/>
    </location>
    <ligand>
        <name>substrate</name>
    </ligand>
</feature>
<feature type="site" description="Transition state stabilizer" evidence="1">
    <location>
        <position position="182"/>
    </location>
</feature>
<sequence>MKKLVLLRHGESTWNKENRFTGWTDVDLTPKGAEEAHNSGRLLREAGFTFDIAYTSVLKRAIRTLWIVLDEMDQMWIPVESSWRLNERHYGALQGLNKLETAVAYGEEQVLIWRRSYDIRPPALTPDDPRYPGCDPRYRNLPKQDIPLTECLQDTVSRFLPYWRESIAPQVKSDKSVLITAHGNSLRALVMYLDNLSEGEIMELNIPTGIPLVYELDDGLKPIRSYYLGDQAKIEQAMQVVANQGKILPNL</sequence>
<accession>Q2Y9Z7</accession>
<organism>
    <name type="scientific">Nitrosospira multiformis (strain ATCC 25196 / NCIMB 11849 / C 71)</name>
    <dbReference type="NCBI Taxonomy" id="323848"/>
    <lineage>
        <taxon>Bacteria</taxon>
        <taxon>Pseudomonadati</taxon>
        <taxon>Pseudomonadota</taxon>
        <taxon>Betaproteobacteria</taxon>
        <taxon>Nitrosomonadales</taxon>
        <taxon>Nitrosomonadaceae</taxon>
        <taxon>Nitrosospira</taxon>
    </lineage>
</organism>
<reference key="1">
    <citation type="submission" date="2005-08" db="EMBL/GenBank/DDBJ databases">
        <title>Complete sequence of chromosome 1 of Nitrosospira multiformis ATCC 25196.</title>
        <authorList>
            <person name="Copeland A."/>
            <person name="Lucas S."/>
            <person name="Lapidus A."/>
            <person name="Barry K."/>
            <person name="Detter J.C."/>
            <person name="Glavina T."/>
            <person name="Hammon N."/>
            <person name="Israni S."/>
            <person name="Pitluck S."/>
            <person name="Chain P."/>
            <person name="Malfatti S."/>
            <person name="Shin M."/>
            <person name="Vergez L."/>
            <person name="Schmutz J."/>
            <person name="Larimer F."/>
            <person name="Land M."/>
            <person name="Hauser L."/>
            <person name="Kyrpides N."/>
            <person name="Lykidis A."/>
            <person name="Richardson P."/>
        </authorList>
    </citation>
    <scope>NUCLEOTIDE SEQUENCE [LARGE SCALE GENOMIC DNA]</scope>
    <source>
        <strain>ATCC 25196 / NCIMB 11849 / C 71</strain>
    </source>
</reference>
<gene>
    <name evidence="1" type="primary">gpmA2</name>
    <name type="ordered locus">Nmul_A1121</name>
</gene>